<dbReference type="PIR" id="A02033">
    <property type="entry name" value="HVMST7"/>
</dbReference>
<dbReference type="SMR" id="P03980"/>
<dbReference type="FunCoup" id="P03980">
    <property type="interactions" value="586"/>
</dbReference>
<dbReference type="InParanoid" id="P03980"/>
<dbReference type="Proteomes" id="UP000000589">
    <property type="component" value="Unplaced"/>
</dbReference>
<dbReference type="RNAct" id="P03980">
    <property type="molecule type" value="protein"/>
</dbReference>
<dbReference type="GO" id="GO:0005576">
    <property type="term" value="C:extracellular region"/>
    <property type="evidence" value="ECO:0007669"/>
    <property type="project" value="UniProtKB-ARBA"/>
</dbReference>
<dbReference type="GO" id="GO:0019814">
    <property type="term" value="C:immunoglobulin complex"/>
    <property type="evidence" value="ECO:0007669"/>
    <property type="project" value="UniProtKB-KW"/>
</dbReference>
<dbReference type="GO" id="GO:0003823">
    <property type="term" value="F:antigen binding"/>
    <property type="evidence" value="ECO:0000318"/>
    <property type="project" value="GO_Central"/>
</dbReference>
<dbReference type="GO" id="GO:0016064">
    <property type="term" value="P:immunoglobulin mediated immune response"/>
    <property type="evidence" value="ECO:0000318"/>
    <property type="project" value="GO_Central"/>
</dbReference>
<dbReference type="CDD" id="cd04981">
    <property type="entry name" value="IgV_H"/>
    <property type="match status" value="1"/>
</dbReference>
<dbReference type="FunFam" id="2.60.40.10:FF:001025">
    <property type="entry name" value="Immunoglobulin heavy variable V1-74"/>
    <property type="match status" value="1"/>
</dbReference>
<dbReference type="Gene3D" id="2.60.40.10">
    <property type="entry name" value="Immunoglobulins"/>
    <property type="match status" value="1"/>
</dbReference>
<dbReference type="InterPro" id="IPR007110">
    <property type="entry name" value="Ig-like_dom"/>
</dbReference>
<dbReference type="InterPro" id="IPR036179">
    <property type="entry name" value="Ig-like_dom_sf"/>
</dbReference>
<dbReference type="InterPro" id="IPR013783">
    <property type="entry name" value="Ig-like_fold"/>
</dbReference>
<dbReference type="InterPro" id="IPR003599">
    <property type="entry name" value="Ig_sub"/>
</dbReference>
<dbReference type="InterPro" id="IPR013106">
    <property type="entry name" value="Ig_V-set"/>
</dbReference>
<dbReference type="InterPro" id="IPR050199">
    <property type="entry name" value="IgHV"/>
</dbReference>
<dbReference type="PANTHER" id="PTHR23266">
    <property type="entry name" value="IMMUNOGLOBULIN HEAVY CHAIN"/>
    <property type="match status" value="1"/>
</dbReference>
<dbReference type="Pfam" id="PF07686">
    <property type="entry name" value="V-set"/>
    <property type="match status" value="1"/>
</dbReference>
<dbReference type="SMART" id="SM00409">
    <property type="entry name" value="IG"/>
    <property type="match status" value="1"/>
</dbReference>
<dbReference type="SMART" id="SM00406">
    <property type="entry name" value="IGv"/>
    <property type="match status" value="1"/>
</dbReference>
<dbReference type="SUPFAM" id="SSF48726">
    <property type="entry name" value="Immunoglobulin"/>
    <property type="match status" value="1"/>
</dbReference>
<dbReference type="PROSITE" id="PS50835">
    <property type="entry name" value="IG_LIKE"/>
    <property type="match status" value="1"/>
</dbReference>
<accession>P03980</accession>
<sequence length="138" mass="15576">MGWSYIILFLVATATDVHSQVQLQQPGAELVKPGASVQLSCKASGHTFTNYWIHWVKQRPGQGLEWIGEINPNDGRSNYNEKFKNKATLTVDKSSSTAYMQLSSLTPEEFAVYYCARSDGYYDWFVYWGQGTLVTFSA</sequence>
<feature type="signal peptide">
    <location>
        <begin position="1"/>
        <end position="20"/>
    </location>
</feature>
<feature type="chain" id="PRO_0000015233" description="Ig heavy chain V region TEPC 1017">
    <location>
        <begin position="21"/>
        <end position="138"/>
    </location>
</feature>
<feature type="region of interest" description="Framework-1">
    <location>
        <begin position="21"/>
        <end position="49"/>
    </location>
</feature>
<feature type="region of interest" description="Complementarity-determining-1">
    <location>
        <begin position="50"/>
        <end position="54"/>
    </location>
</feature>
<feature type="region of interest" description="Framework-2">
    <location>
        <begin position="55"/>
        <end position="68"/>
    </location>
</feature>
<feature type="region of interest" description="Complementarity-determining-2">
    <location>
        <begin position="69"/>
        <end position="85"/>
    </location>
</feature>
<feature type="region of interest" description="Framework-3">
    <location>
        <begin position="86"/>
        <end position="117"/>
    </location>
</feature>
<feature type="region of interest" description="Complementarity-determining-3">
    <location>
        <begin position="118"/>
        <end position="127"/>
    </location>
</feature>
<feature type="region of interest" description="Framework-4">
    <location>
        <begin position="128"/>
        <end position="138"/>
    </location>
</feature>
<feature type="disulfide bond" evidence="1">
    <location>
        <begin position="41"/>
        <end position="115"/>
    </location>
</feature>
<feature type="non-terminal residue">
    <location>
        <position position="138"/>
    </location>
</feature>
<proteinExistence type="predicted"/>
<name>HVM48_MOUSE</name>
<keyword id="KW-1064">Adaptive immunity</keyword>
<keyword id="KW-1015">Disulfide bond</keyword>
<keyword id="KW-0391">Immunity</keyword>
<keyword id="KW-1280">Immunoglobulin</keyword>
<keyword id="KW-1185">Reference proteome</keyword>
<keyword id="KW-0732">Signal</keyword>
<protein>
    <recommendedName>
        <fullName>Ig heavy chain V region TEPC 1017</fullName>
    </recommendedName>
</protein>
<evidence type="ECO:0000255" key="1">
    <source>
        <dbReference type="PROSITE-ProRule" id="PRU00114"/>
    </source>
</evidence>
<reference key="1">
    <citation type="journal article" date="1984" name="Proc. Natl. Acad. Sci. U.S.A.">
        <title>Illegitimate recombination generates a class switch from C mu to C delta in an IgD-secreting plasmacytoma.</title>
        <authorList>
            <person name="Gilliam A.C."/>
            <person name="Shen A."/>
            <person name="Richards J.E."/>
            <person name="Blattner F.R."/>
            <person name="Mushinski J.F."/>
            <person name="Tucker P.W."/>
        </authorList>
    </citation>
    <scope>NUCLEOTIDE SEQUENCE</scope>
</reference>
<organism>
    <name type="scientific">Mus musculus</name>
    <name type="common">Mouse</name>
    <dbReference type="NCBI Taxonomy" id="10090"/>
    <lineage>
        <taxon>Eukaryota</taxon>
        <taxon>Metazoa</taxon>
        <taxon>Chordata</taxon>
        <taxon>Craniata</taxon>
        <taxon>Vertebrata</taxon>
        <taxon>Euteleostomi</taxon>
        <taxon>Mammalia</taxon>
        <taxon>Eutheria</taxon>
        <taxon>Euarchontoglires</taxon>
        <taxon>Glires</taxon>
        <taxon>Rodentia</taxon>
        <taxon>Myomorpha</taxon>
        <taxon>Muroidea</taxon>
        <taxon>Muridae</taxon>
        <taxon>Murinae</taxon>
        <taxon>Mus</taxon>
        <taxon>Mus</taxon>
    </lineage>
</organism>